<keyword id="KW-0119">Carbohydrate metabolism</keyword>
<keyword id="KW-0520">NAD</keyword>
<keyword id="KW-0560">Oxidoreductase</keyword>
<comment type="function">
    <text evidence="2">Involved in the degradation of 3,6-anhydro-L-galactose, which is the major monomeric sugar of red macroalgae. Catalyzes the fourth step of the pathway, the reduction of 3-deoxy-D-glycero-2,5-hexodiulosonate (L-DDGal) to 2-dehydro-3-deoxy-D-gluconate (KDG).</text>
</comment>
<comment type="catalytic activity">
    <reaction evidence="2">
        <text>2-dehydro-3-deoxy-D-gluconate + NAD(+) = 3-deoxy-D-glycero-2,5-hexodiulosonate + NADH + H(+)</text>
        <dbReference type="Rhea" id="RHEA:24232"/>
        <dbReference type="ChEBI" id="CHEBI:15378"/>
        <dbReference type="ChEBI" id="CHEBI:29071"/>
        <dbReference type="ChEBI" id="CHEBI:57540"/>
        <dbReference type="ChEBI" id="CHEBI:57945"/>
        <dbReference type="ChEBI" id="CHEBI:57990"/>
        <dbReference type="EC" id="1.1.1.127"/>
    </reaction>
</comment>
<comment type="similarity">
    <text evidence="4">Belongs to the short-chain dehydrogenases/reductases (SDR) family.</text>
</comment>
<dbReference type="EC" id="1.1.1.127" evidence="2"/>
<dbReference type="EMBL" id="CP000388">
    <property type="protein sequence ID" value="ABG41068.1"/>
    <property type="molecule type" value="Genomic_DNA"/>
</dbReference>
<dbReference type="RefSeq" id="WP_011575334.1">
    <property type="nucleotide sequence ID" value="NC_008228.1"/>
</dbReference>
<dbReference type="SMR" id="Q15SS0"/>
<dbReference type="STRING" id="342610.Patl_2552"/>
<dbReference type="KEGG" id="pat:Patl_2552"/>
<dbReference type="eggNOG" id="COG1028">
    <property type="taxonomic scope" value="Bacteria"/>
</dbReference>
<dbReference type="HOGENOM" id="CLU_010194_1_1_6"/>
<dbReference type="OrthoDB" id="9803333at2"/>
<dbReference type="BioCyc" id="MetaCyc:MONOMER-19467"/>
<dbReference type="Proteomes" id="UP000001981">
    <property type="component" value="Chromosome"/>
</dbReference>
<dbReference type="GO" id="GO:0047001">
    <property type="term" value="F:2-dehydro-3-deoxy-D-gluconate 5-dehydrogenase activity"/>
    <property type="evidence" value="ECO:0007669"/>
    <property type="project" value="UniProtKB-EC"/>
</dbReference>
<dbReference type="FunFam" id="3.40.50.720:FF:000084">
    <property type="entry name" value="Short-chain dehydrogenase reductase"/>
    <property type="match status" value="1"/>
</dbReference>
<dbReference type="Gene3D" id="3.40.50.720">
    <property type="entry name" value="NAD(P)-binding Rossmann-like Domain"/>
    <property type="match status" value="1"/>
</dbReference>
<dbReference type="InterPro" id="IPR036291">
    <property type="entry name" value="NAD(P)-bd_dom_sf"/>
</dbReference>
<dbReference type="InterPro" id="IPR020904">
    <property type="entry name" value="Sc_DH/Rdtase_CS"/>
</dbReference>
<dbReference type="InterPro" id="IPR002347">
    <property type="entry name" value="SDR_fam"/>
</dbReference>
<dbReference type="PANTHER" id="PTHR42760:SF5">
    <property type="entry name" value="2-DEHYDRO-3-DEOXY-D-GLUCONATE 5-DEHYDROGENASE"/>
    <property type="match status" value="1"/>
</dbReference>
<dbReference type="PANTHER" id="PTHR42760">
    <property type="entry name" value="SHORT-CHAIN DEHYDROGENASES/REDUCTASES FAMILY MEMBER"/>
    <property type="match status" value="1"/>
</dbReference>
<dbReference type="Pfam" id="PF13561">
    <property type="entry name" value="adh_short_C2"/>
    <property type="match status" value="1"/>
</dbReference>
<dbReference type="PRINTS" id="PR00081">
    <property type="entry name" value="GDHRDH"/>
</dbReference>
<dbReference type="PRINTS" id="PR00080">
    <property type="entry name" value="SDRFAMILY"/>
</dbReference>
<dbReference type="SUPFAM" id="SSF51735">
    <property type="entry name" value="NAD(P)-binding Rossmann-fold domains"/>
    <property type="match status" value="1"/>
</dbReference>
<dbReference type="PROSITE" id="PS00061">
    <property type="entry name" value="ADH_SHORT"/>
    <property type="match status" value="1"/>
</dbReference>
<sequence>MLEKFSLEGKVALVTGCKRGIGKGIALGLAEAGADIIGVSASLALEGSDVENEVKALGRNFKGYQCDFSDRDALYAFIKEVKADFPKIDILVNNAGTILRAPAAEHGDDLWDKVIDVNLNSQFILSREIGKEMVARQSGKIIFTASLLTFQGGITVPGYAASKGAIGQLVMALSNEWAGKGVNVNAIAPGYIDTDNTQALREDSERSAAILGRIPQGRWGNPDDFKGPAVFLASDAASYVNGAILLVDGGWMGR</sequence>
<evidence type="ECO:0000255" key="1">
    <source>
        <dbReference type="PROSITE-ProRule" id="PRU10001"/>
    </source>
</evidence>
<evidence type="ECO:0000269" key="2">
    <source ref="2"/>
</evidence>
<evidence type="ECO:0000303" key="3">
    <source ref="2"/>
</evidence>
<evidence type="ECO:0000305" key="4"/>
<evidence type="ECO:0000312" key="5">
    <source>
        <dbReference type="EMBL" id="ABG41068.1"/>
    </source>
</evidence>
<proteinExistence type="evidence at protein level"/>
<protein>
    <recommendedName>
        <fullName evidence="4">2-dehydro-3-deoxy-D-gluconate 5-dehydrogenase</fullName>
        <ecNumber evidence="2">1.1.1.127</ecNumber>
    </recommendedName>
    <alternativeName>
        <fullName evidence="3">2,5-diketo-3-deoxy-L-galactonate 5-reductase</fullName>
    </alternativeName>
</protein>
<feature type="chain" id="PRO_0000449955" description="2-dehydro-3-deoxy-D-gluconate 5-dehydrogenase">
    <location>
        <begin position="1"/>
        <end position="254"/>
    </location>
</feature>
<feature type="active site" description="Proton acceptor" evidence="1">
    <location>
        <position position="159"/>
    </location>
</feature>
<name>DDGLD_PSEA6</name>
<gene>
    <name evidence="5" type="ordered locus">Patl_2552</name>
</gene>
<reference key="1">
    <citation type="submission" date="2006-06" db="EMBL/GenBank/DDBJ databases">
        <title>Complete sequence of Pseudoalteromonas atlantica T6c.</title>
        <authorList>
            <consortium name="US DOE Joint Genome Institute"/>
            <person name="Copeland A."/>
            <person name="Lucas S."/>
            <person name="Lapidus A."/>
            <person name="Barry K."/>
            <person name="Detter J.C."/>
            <person name="Glavina del Rio T."/>
            <person name="Hammon N."/>
            <person name="Israni S."/>
            <person name="Dalin E."/>
            <person name="Tice H."/>
            <person name="Pitluck S."/>
            <person name="Saunders E."/>
            <person name="Brettin T."/>
            <person name="Bruce D."/>
            <person name="Han C."/>
            <person name="Tapia R."/>
            <person name="Gilna P."/>
            <person name="Schmutz J."/>
            <person name="Larimer F."/>
            <person name="Land M."/>
            <person name="Hauser L."/>
            <person name="Kyrpides N."/>
            <person name="Kim E."/>
            <person name="Karls A.C."/>
            <person name="Bartlett D."/>
            <person name="Higgins B.P."/>
            <person name="Richardson P."/>
        </authorList>
    </citation>
    <scope>NUCLEOTIDE SEQUENCE [LARGE SCALE GENOMIC DNA]</scope>
    <source>
        <strain>T6c / ATCC BAA-1087</strain>
    </source>
</reference>
<reference key="2">
    <citation type="journal article" date="2014" name="Biotechnol. Bioprocess Eng.">
        <title>Metabolic pathway of 3,6-anhydro-L-galactose in agar-degrading microorganisms.</title>
        <authorList>
            <person name="Lee S.B."/>
            <person name="Cho S.J."/>
            <person name="Kim J.A."/>
            <person name="Lee S.Y."/>
            <person name="Kim S.M."/>
            <person name="Lim H.S."/>
        </authorList>
    </citation>
    <scope>FUNCTION</scope>
    <scope>CATALYTIC ACTIVITY</scope>
    <source>
        <strain>T6c / ATCC BAA-1087</strain>
    </source>
</reference>
<accession>Q15SS0</accession>
<organism>
    <name type="scientific">Pseudoalteromonas atlantica (strain T6c / ATCC BAA-1087)</name>
    <dbReference type="NCBI Taxonomy" id="3042615"/>
    <lineage>
        <taxon>Bacteria</taxon>
        <taxon>Pseudomonadati</taxon>
        <taxon>Pseudomonadota</taxon>
        <taxon>Gammaproteobacteria</taxon>
        <taxon>Alteromonadales</taxon>
        <taxon>Alteromonadaceae</taxon>
        <taxon>Paraglaciecola</taxon>
    </lineage>
</organism>